<sequence length="374" mass="41135">MGLMDTRWETIVPFIVMALMEACTIALTILAKTALTGGMSPFVFIVYTNALGSLLLLPYSFYFHRDESDDEPFLTKPSLVRIFLLGFTGVFLFQNMAFLGLSYSSPIVVCAMGLQSPAFSFLLSLALGKEGGLGWASKRTKGRVIGTLICFTGAFVEVIYLGPFIRPSPPSSPTSNFLTTISHYLTFFKNSDNWALGSLLLACATLSISIWNIIQLDTVQKYPQVMKVVSAYSLAGTLQCAIFSAFMEPDLSAWELKLNMDLYLIIATGIFGSIIRTSVQVKCSKMKGPYYVPLFKPFGILWASIFGTSFFVNSLHYGSVLGAAIAGTGYLLIMWSQVQKDDPNETVEKNDNHQLDSDEQTTPLLLANGDFDQV</sequence>
<protein>
    <recommendedName>
        <fullName>WAT1-related protein At1g60050</fullName>
    </recommendedName>
</protein>
<organism>
    <name type="scientific">Arabidopsis thaliana</name>
    <name type="common">Mouse-ear cress</name>
    <dbReference type="NCBI Taxonomy" id="3702"/>
    <lineage>
        <taxon>Eukaryota</taxon>
        <taxon>Viridiplantae</taxon>
        <taxon>Streptophyta</taxon>
        <taxon>Embryophyta</taxon>
        <taxon>Tracheophyta</taxon>
        <taxon>Spermatophyta</taxon>
        <taxon>Magnoliopsida</taxon>
        <taxon>eudicotyledons</taxon>
        <taxon>Gunneridae</taxon>
        <taxon>Pentapetalae</taxon>
        <taxon>rosids</taxon>
        <taxon>malvids</taxon>
        <taxon>Brassicales</taxon>
        <taxon>Brassicaceae</taxon>
        <taxon>Camelineae</taxon>
        <taxon>Arabidopsis</taxon>
    </lineage>
</organism>
<accession>Q9ZUI8</accession>
<feature type="chain" id="PRO_0000421317" description="WAT1-related protein At1g60050">
    <location>
        <begin position="1"/>
        <end position="374"/>
    </location>
</feature>
<feature type="transmembrane region" description="Helical" evidence="2">
    <location>
        <begin position="11"/>
        <end position="31"/>
    </location>
</feature>
<feature type="transmembrane region" description="Helical" evidence="2">
    <location>
        <begin position="42"/>
        <end position="62"/>
    </location>
</feature>
<feature type="transmembrane region" description="Helical" evidence="2">
    <location>
        <begin position="82"/>
        <end position="102"/>
    </location>
</feature>
<feature type="transmembrane region" description="Helical" evidence="2">
    <location>
        <begin position="107"/>
        <end position="127"/>
    </location>
</feature>
<feature type="transmembrane region" description="Helical" evidence="2">
    <location>
        <begin position="145"/>
        <end position="165"/>
    </location>
</feature>
<feature type="transmembrane region" description="Helical" evidence="2">
    <location>
        <begin position="194"/>
        <end position="214"/>
    </location>
</feature>
<feature type="transmembrane region" description="Helical" evidence="2">
    <location>
        <begin position="228"/>
        <end position="248"/>
    </location>
</feature>
<feature type="transmembrane region" description="Helical" evidence="2">
    <location>
        <begin position="255"/>
        <end position="275"/>
    </location>
</feature>
<feature type="transmembrane region" description="Helical" evidence="2">
    <location>
        <begin position="292"/>
        <end position="312"/>
    </location>
</feature>
<feature type="transmembrane region" description="Helical" evidence="2">
    <location>
        <begin position="315"/>
        <end position="335"/>
    </location>
</feature>
<feature type="domain" description="EamA">
    <location>
        <begin position="26"/>
        <end position="155"/>
    </location>
</feature>
<name>WTR9_ARATH</name>
<keyword id="KW-0472">Membrane</keyword>
<keyword id="KW-1185">Reference proteome</keyword>
<keyword id="KW-0812">Transmembrane</keyword>
<keyword id="KW-1133">Transmembrane helix</keyword>
<comment type="subcellular location">
    <subcellularLocation>
        <location evidence="1">Membrane</location>
        <topology evidence="3">Multi-pass membrane protein</topology>
    </subcellularLocation>
</comment>
<comment type="similarity">
    <text evidence="3">Belongs to the drug/metabolite transporter (DMT) superfamily. Plant drug/metabolite exporter (P-DME) (TC 2.A.7.4) family.</text>
</comment>
<proteinExistence type="inferred from homology"/>
<evidence type="ECO:0000250" key="1"/>
<evidence type="ECO:0000255" key="2"/>
<evidence type="ECO:0000305" key="3"/>
<dbReference type="EMBL" id="AC005966">
    <property type="protein sequence ID" value="AAD14481.1"/>
    <property type="molecule type" value="Genomic_DNA"/>
</dbReference>
<dbReference type="EMBL" id="CP002684">
    <property type="protein sequence ID" value="AEE33653.1"/>
    <property type="molecule type" value="Genomic_DNA"/>
</dbReference>
<dbReference type="PIR" id="H96624">
    <property type="entry name" value="H96624"/>
</dbReference>
<dbReference type="RefSeq" id="NP_176213.1">
    <property type="nucleotide sequence ID" value="NM_104697.2"/>
</dbReference>
<dbReference type="SMR" id="Q9ZUI8"/>
<dbReference type="BioGRID" id="27524">
    <property type="interactions" value="6"/>
</dbReference>
<dbReference type="IntAct" id="Q9ZUI8">
    <property type="interactions" value="6"/>
</dbReference>
<dbReference type="TCDB" id="2.A.7.4.3">
    <property type="family name" value="the drug/metabolite transporter (dmt) superfamily"/>
</dbReference>
<dbReference type="PaxDb" id="3702-AT1G60050.1"/>
<dbReference type="EnsemblPlants" id="AT1G60050.1">
    <property type="protein sequence ID" value="AT1G60050.1"/>
    <property type="gene ID" value="AT1G60050"/>
</dbReference>
<dbReference type="GeneID" id="842299"/>
<dbReference type="Gramene" id="AT1G60050.1">
    <property type="protein sequence ID" value="AT1G60050.1"/>
    <property type="gene ID" value="AT1G60050"/>
</dbReference>
<dbReference type="KEGG" id="ath:AT1G60050"/>
<dbReference type="Araport" id="AT1G60050"/>
<dbReference type="TAIR" id="AT1G60050">
    <property type="gene designation" value="UMAMIT35"/>
</dbReference>
<dbReference type="eggNOG" id="ENOG502QW2M">
    <property type="taxonomic scope" value="Eukaryota"/>
</dbReference>
<dbReference type="HOGENOM" id="CLU_025359_0_1_1"/>
<dbReference type="InParanoid" id="Q9ZUI8"/>
<dbReference type="OMA" id="YSFFFHR"/>
<dbReference type="OrthoDB" id="1733956at2759"/>
<dbReference type="PhylomeDB" id="Q9ZUI8"/>
<dbReference type="PRO" id="PR:Q9ZUI8"/>
<dbReference type="Proteomes" id="UP000006548">
    <property type="component" value="Chromosome 1"/>
</dbReference>
<dbReference type="ExpressionAtlas" id="Q9ZUI8">
    <property type="expression patterns" value="baseline and differential"/>
</dbReference>
<dbReference type="GO" id="GO:0016020">
    <property type="term" value="C:membrane"/>
    <property type="evidence" value="ECO:0007669"/>
    <property type="project" value="UniProtKB-SubCell"/>
</dbReference>
<dbReference type="GO" id="GO:0022857">
    <property type="term" value="F:transmembrane transporter activity"/>
    <property type="evidence" value="ECO:0007669"/>
    <property type="project" value="InterPro"/>
</dbReference>
<dbReference type="InterPro" id="IPR000620">
    <property type="entry name" value="EamA_dom"/>
</dbReference>
<dbReference type="InterPro" id="IPR030184">
    <property type="entry name" value="WAT1-related"/>
</dbReference>
<dbReference type="PANTHER" id="PTHR31218">
    <property type="entry name" value="WAT1-RELATED PROTEIN"/>
    <property type="match status" value="1"/>
</dbReference>
<dbReference type="Pfam" id="PF00892">
    <property type="entry name" value="EamA"/>
    <property type="match status" value="1"/>
</dbReference>
<gene>
    <name type="ordered locus">At1g60050</name>
    <name type="ORF">T2K10.10</name>
</gene>
<reference key="1">
    <citation type="journal article" date="2000" name="Nature">
        <title>Sequence and analysis of chromosome 1 of the plant Arabidopsis thaliana.</title>
        <authorList>
            <person name="Theologis A."/>
            <person name="Ecker J.R."/>
            <person name="Palm C.J."/>
            <person name="Federspiel N.A."/>
            <person name="Kaul S."/>
            <person name="White O."/>
            <person name="Alonso J."/>
            <person name="Altafi H."/>
            <person name="Araujo R."/>
            <person name="Bowman C.L."/>
            <person name="Brooks S.Y."/>
            <person name="Buehler E."/>
            <person name="Chan A."/>
            <person name="Chao Q."/>
            <person name="Chen H."/>
            <person name="Cheuk R.F."/>
            <person name="Chin C.W."/>
            <person name="Chung M.K."/>
            <person name="Conn L."/>
            <person name="Conway A.B."/>
            <person name="Conway A.R."/>
            <person name="Creasy T.H."/>
            <person name="Dewar K."/>
            <person name="Dunn P."/>
            <person name="Etgu P."/>
            <person name="Feldblyum T.V."/>
            <person name="Feng J.-D."/>
            <person name="Fong B."/>
            <person name="Fujii C.Y."/>
            <person name="Gill J.E."/>
            <person name="Goldsmith A.D."/>
            <person name="Haas B."/>
            <person name="Hansen N.F."/>
            <person name="Hughes B."/>
            <person name="Huizar L."/>
            <person name="Hunter J.L."/>
            <person name="Jenkins J."/>
            <person name="Johnson-Hopson C."/>
            <person name="Khan S."/>
            <person name="Khaykin E."/>
            <person name="Kim C.J."/>
            <person name="Koo H.L."/>
            <person name="Kremenetskaia I."/>
            <person name="Kurtz D.B."/>
            <person name="Kwan A."/>
            <person name="Lam B."/>
            <person name="Langin-Hooper S."/>
            <person name="Lee A."/>
            <person name="Lee J.M."/>
            <person name="Lenz C.A."/>
            <person name="Li J.H."/>
            <person name="Li Y.-P."/>
            <person name="Lin X."/>
            <person name="Liu S.X."/>
            <person name="Liu Z.A."/>
            <person name="Luros J.S."/>
            <person name="Maiti R."/>
            <person name="Marziali A."/>
            <person name="Militscher J."/>
            <person name="Miranda M."/>
            <person name="Nguyen M."/>
            <person name="Nierman W.C."/>
            <person name="Osborne B.I."/>
            <person name="Pai G."/>
            <person name="Peterson J."/>
            <person name="Pham P.K."/>
            <person name="Rizzo M."/>
            <person name="Rooney T."/>
            <person name="Rowley D."/>
            <person name="Sakano H."/>
            <person name="Salzberg S.L."/>
            <person name="Schwartz J.R."/>
            <person name="Shinn P."/>
            <person name="Southwick A.M."/>
            <person name="Sun H."/>
            <person name="Tallon L.J."/>
            <person name="Tambunga G."/>
            <person name="Toriumi M.J."/>
            <person name="Town C.D."/>
            <person name="Utterback T."/>
            <person name="Van Aken S."/>
            <person name="Vaysberg M."/>
            <person name="Vysotskaia V.S."/>
            <person name="Walker M."/>
            <person name="Wu D."/>
            <person name="Yu G."/>
            <person name="Fraser C.M."/>
            <person name="Venter J.C."/>
            <person name="Davis R.W."/>
        </authorList>
    </citation>
    <scope>NUCLEOTIDE SEQUENCE [LARGE SCALE GENOMIC DNA]</scope>
    <source>
        <strain>cv. Columbia</strain>
    </source>
</reference>
<reference key="2">
    <citation type="journal article" date="2017" name="Plant J.">
        <title>Araport11: a complete reannotation of the Arabidopsis thaliana reference genome.</title>
        <authorList>
            <person name="Cheng C.Y."/>
            <person name="Krishnakumar V."/>
            <person name="Chan A.P."/>
            <person name="Thibaud-Nissen F."/>
            <person name="Schobel S."/>
            <person name="Town C.D."/>
        </authorList>
    </citation>
    <scope>GENOME REANNOTATION</scope>
    <source>
        <strain>cv. Columbia</strain>
    </source>
</reference>